<dbReference type="EC" id="2.7.7.48"/>
<dbReference type="EMBL" id="EF583010">
    <property type="protein sequence ID" value="ABQ59572.1"/>
    <property type="molecule type" value="Genomic_RNA"/>
</dbReference>
<dbReference type="SMR" id="B3F2X5"/>
<dbReference type="Proteomes" id="UP000145116">
    <property type="component" value="Genome"/>
</dbReference>
<dbReference type="GO" id="GO:0044423">
    <property type="term" value="C:virion component"/>
    <property type="evidence" value="ECO:0007669"/>
    <property type="project" value="UniProtKB-KW"/>
</dbReference>
<dbReference type="GO" id="GO:0000166">
    <property type="term" value="F:nucleotide binding"/>
    <property type="evidence" value="ECO:0007669"/>
    <property type="project" value="UniProtKB-KW"/>
</dbReference>
<dbReference type="GO" id="GO:0003723">
    <property type="term" value="F:RNA binding"/>
    <property type="evidence" value="ECO:0007669"/>
    <property type="project" value="UniProtKB-KW"/>
</dbReference>
<dbReference type="GO" id="GO:0003968">
    <property type="term" value="F:RNA-directed RNA polymerase activity"/>
    <property type="evidence" value="ECO:0007669"/>
    <property type="project" value="UniProtKB-KW"/>
</dbReference>
<dbReference type="GO" id="GO:0006351">
    <property type="term" value="P:DNA-templated transcription"/>
    <property type="evidence" value="ECO:0007669"/>
    <property type="project" value="InterPro"/>
</dbReference>
<dbReference type="GO" id="GO:0019079">
    <property type="term" value="P:viral genome replication"/>
    <property type="evidence" value="ECO:0007669"/>
    <property type="project" value="InterPro"/>
</dbReference>
<dbReference type="Gene3D" id="1.10.357.80">
    <property type="match status" value="2"/>
</dbReference>
<dbReference type="Gene3D" id="1.20.120.1390">
    <property type="match status" value="1"/>
</dbReference>
<dbReference type="Gene3D" id="3.30.230.140">
    <property type="match status" value="2"/>
</dbReference>
<dbReference type="Gene3D" id="3.30.70.2480">
    <property type="match status" value="1"/>
</dbReference>
<dbReference type="Gene3D" id="1.10.10.1990">
    <property type="entry name" value="Viral RNA-directed RNA polymerase, 4-helical domain"/>
    <property type="match status" value="1"/>
</dbReference>
<dbReference type="InterPro" id="IPR043502">
    <property type="entry name" value="DNA/RNA_pol_sf"/>
</dbReference>
<dbReference type="InterPro" id="IPR042032">
    <property type="entry name" value="RNA-dir_pol_4-hel_dom"/>
</dbReference>
<dbReference type="InterPro" id="IPR001795">
    <property type="entry name" value="RNA-dir_pol_luteovirus"/>
</dbReference>
<dbReference type="InterPro" id="IPR007097">
    <property type="entry name" value="RNA-dir_pol_reovirus"/>
</dbReference>
<dbReference type="InterPro" id="IPR022071">
    <property type="entry name" value="Rotavirus_VP1_C"/>
</dbReference>
<dbReference type="Pfam" id="PF02123">
    <property type="entry name" value="RdRP_4"/>
    <property type="match status" value="1"/>
</dbReference>
<dbReference type="Pfam" id="PF12289">
    <property type="entry name" value="Rotavirus_VP1"/>
    <property type="match status" value="1"/>
</dbReference>
<dbReference type="SUPFAM" id="SSF56672">
    <property type="entry name" value="DNA/RNA polymerases"/>
    <property type="match status" value="1"/>
</dbReference>
<dbReference type="PROSITE" id="PS50523">
    <property type="entry name" value="RDRP_DSRNA_REO"/>
    <property type="match status" value="1"/>
</dbReference>
<sequence length="1088" mass="124828">MGKYNLILSEYLSFIYNSQSAVQIPIYYSSNSDLEKRCIEFHSKCLENSKKGLSLKNIFVEYKDVVENATLLSILSYSYDKYNAVERKLVYYAKGKPLEADLSANKLDYENNKLTSDLFPTAEEYTDSLMDPAILTSLSSNLNAVMFWLEKHANDTAEKAKIYKRRLDLFTIVASTVNKYGVPRHNAKYRYEYEVMKDKPYYLVTWANSSIEMLMSVFSHEDYLIAKELIVLSYSNRSTLAKLVSSPMSILVALVDINGTFITNEELELEFSNKYVKAIVPDQTFEELKEMLDNMKKAGLVDIPKMIQDWLVDCSIEKFPLMAKIYSWSFHVGFRKQKMLDAALDQLKTEYTEDVDDEMYREYTMLIRDEVVKMLEEAVKHDDHLLQDSELAGLLSMSSASNGESRQLKFGRKTIFSTKKNMHVMDDMANGRYTPGVIPPVNVDKPIPLGRRDVPGRRTRIIFILPYEYFIAQHAVVEKMLLYAKHTREYAEFYSQSNQLLSYGDVTRFLSNNAMVLYTDVSQWDSSQHNTQPFRKGIIMGLDILANMTNDAKVIQTLHLYKQTQINLMDSYVQIPDGNVIKKIQYGAVASGEKQTKAANSIANLALIKTVLSRIANKYSFVTKIIRVDGDDNYAVLQFNTEVTKQMVQDVSNDVRDTYARMNAKVKALVSTVGIEIAKRYIAGGKIFFRAGINLLNNEKRGQSTQWDQAAVLYSNYIVNRLRGFETDREFILTKIMQMTSVAITGSLRLFPSERVLTTNSTFKVFDSEDFIIEYGTTDDEVYIQRAFMSLSSQKSGIADEIAASQTFKNYVSKLSDQLLVSKNTIVSRGIALTEKAKLNSYAPISLEKRRAQISALLTMLQKPVTFKSNKITINDILHDIKPYFVTSEANLPMQYQKFMPTLPNNVQYIIQCIGSRTYQIEDDGSKSAISKLISKYSVYRPSIEELYKVISLHEQEIQLYLVSLGIPKIDADTYVGSKIYSQDKYRILESYVYNLLSINYGCYQLFDFNSPDLEKLIRIPFKGKIPAVTFILHLYAKLEIINYAIKNGSWISLFCNYPKSEMIKLWKKMWNITSLRSPYTNANFFQD</sequence>
<reference key="1">
    <citation type="submission" date="2007-04" db="EMBL/GenBank/DDBJ databases">
        <authorList>
            <person name="Brown T.L."/>
            <person name="Yang H."/>
            <person name="Patton J.T."/>
        </authorList>
    </citation>
    <scope>NUCLEOTIDE SEQUENCE [GENOMIC RNA]</scope>
</reference>
<name>RDRP_ROTTU</name>
<organismHost>
    <name type="scientific">Macaca mulatta</name>
    <name type="common">Rhesus macaque</name>
    <dbReference type="NCBI Taxonomy" id="9544"/>
</organismHost>
<comment type="function">
    <text evidence="2">RNA-directed RNA polymerase that is involved in both transcription and genome replication. Together with VP3 capping enzyme, forms an enzyme complex positioned near the channels situated at each of the five-fold vertices of the core. Following infection, the outermost layer of the virus is lost, leaving a double-layered particle (DLP) made up of the core and VP6 shell. VP1 then catalyzes the transcription of fully conservative plus-strand genomic RNAs that are extruded through the DLP's channels into the cytoplasm where they function as mRNAs for translation of viral proteins. One copy of each of the viral (+)RNAs is also recruited during core assembly, together with newly synthesized polymerase complexes and VP2. The polymerase of these novo-formed particles catalyzes the synthesis of complementary minus-strands leading to dsRNA formation. To do so, the polymerase specifically recognizes and binds 4 bases 5'-UGUG-3' in the conserved 3'-sequence of plus-strand RNA templates. VP2 presumably activates the autoinhibited VP1-RNA complex to coordinate packaging and genome replication. Once dsRNA synthesis is complete, the polymerase switches to the transcriptional mode, thus providing secondary transcription (By similarity).</text>
</comment>
<comment type="catalytic activity">
    <reaction evidence="2">
        <text>RNA(n) + a ribonucleoside 5'-triphosphate = RNA(n+1) + diphosphate</text>
        <dbReference type="Rhea" id="RHEA:21248"/>
        <dbReference type="Rhea" id="RHEA-COMP:14527"/>
        <dbReference type="Rhea" id="RHEA-COMP:17342"/>
        <dbReference type="ChEBI" id="CHEBI:33019"/>
        <dbReference type="ChEBI" id="CHEBI:61557"/>
        <dbReference type="ChEBI" id="CHEBI:140395"/>
        <dbReference type="EC" id="2.7.7.48"/>
    </reaction>
</comment>
<comment type="cofactor">
    <cofactor evidence="3">
        <name>Mg(2+)</name>
        <dbReference type="ChEBI" id="CHEBI:18420"/>
    </cofactor>
</comment>
<comment type="subunit">
    <text evidence="1 3">Interacts with VP3 (Potential). Interacts with VP2; this interaction activates VP1. Interacts with NSP5; this interaction is probably necessary for the formation of functional virus factories. Interacts with NSP2; this interaction is weak (By similarity).</text>
</comment>
<comment type="subcellular location">
    <subcellularLocation>
        <location evidence="3">Virion</location>
    </subcellularLocation>
    <text evidence="1">Attached inside the inner capsid as a minor component. Also found in spherical cytoplasmic structures, called virus factories, that appear early after infection and are the site of viral replication and packaging (By similarity).</text>
</comment>
<comment type="similarity">
    <text evidence="3">Belongs to the reoviridae RNA-directed RNA polymerase family.</text>
</comment>
<protein>
    <recommendedName>
        <fullName>RNA-directed RNA polymerase</fullName>
        <ecNumber>2.7.7.48</ecNumber>
    </recommendedName>
    <alternativeName>
        <fullName>Protein VP1</fullName>
    </alternativeName>
</protein>
<evidence type="ECO:0000250" key="1"/>
<evidence type="ECO:0000255" key="2">
    <source>
        <dbReference type="PROSITE-ProRule" id="PRU00539"/>
    </source>
</evidence>
<evidence type="ECO:0000305" key="3"/>
<organism>
    <name type="scientific">Rotavirus A (isolate RVA/Monkey/United States/TUCH/2003/G3P[24])</name>
    <name type="common">RV-A</name>
    <dbReference type="NCBI Taxonomy" id="444186"/>
    <lineage>
        <taxon>Viruses</taxon>
        <taxon>Riboviria</taxon>
        <taxon>Orthornavirae</taxon>
        <taxon>Duplornaviricota</taxon>
        <taxon>Resentoviricetes</taxon>
        <taxon>Reovirales</taxon>
        <taxon>Sedoreoviridae</taxon>
        <taxon>Rotavirus</taxon>
        <taxon>Rotavirus A</taxon>
    </lineage>
</organism>
<proteinExistence type="inferred from homology"/>
<accession>B3F2X5</accession>
<feature type="chain" id="PRO_0000368035" description="RNA-directed RNA polymerase">
    <location>
        <begin position="1"/>
        <end position="1088"/>
    </location>
</feature>
<feature type="domain" description="RdRp catalytic" evidence="2">
    <location>
        <begin position="501"/>
        <end position="687"/>
    </location>
</feature>
<keyword id="KW-0460">Magnesium</keyword>
<keyword id="KW-0547">Nucleotide-binding</keyword>
<keyword id="KW-0548">Nucleotidyltransferase</keyword>
<keyword id="KW-0694">RNA-binding</keyword>
<keyword id="KW-0696">RNA-directed RNA polymerase</keyword>
<keyword id="KW-0808">Transferase</keyword>
<keyword id="KW-0693">Viral RNA replication</keyword>
<keyword id="KW-0946">Virion</keyword>